<reference key="1">
    <citation type="journal article" date="2002" name="Nature">
        <title>The genome sequence and structure of rice chromosome 1.</title>
        <authorList>
            <person name="Sasaki T."/>
            <person name="Matsumoto T."/>
            <person name="Yamamoto K."/>
            <person name="Sakata K."/>
            <person name="Baba T."/>
            <person name="Katayose Y."/>
            <person name="Wu J."/>
            <person name="Niimura Y."/>
            <person name="Cheng Z."/>
            <person name="Nagamura Y."/>
            <person name="Antonio B.A."/>
            <person name="Kanamori H."/>
            <person name="Hosokawa S."/>
            <person name="Masukawa M."/>
            <person name="Arikawa K."/>
            <person name="Chiden Y."/>
            <person name="Hayashi M."/>
            <person name="Okamoto M."/>
            <person name="Ando T."/>
            <person name="Aoki H."/>
            <person name="Arita K."/>
            <person name="Hamada M."/>
            <person name="Harada C."/>
            <person name="Hijishita S."/>
            <person name="Honda M."/>
            <person name="Ichikawa Y."/>
            <person name="Idonuma A."/>
            <person name="Iijima M."/>
            <person name="Ikeda M."/>
            <person name="Ikeno M."/>
            <person name="Ito S."/>
            <person name="Ito T."/>
            <person name="Ito Y."/>
            <person name="Ito Y."/>
            <person name="Iwabuchi A."/>
            <person name="Kamiya K."/>
            <person name="Karasawa W."/>
            <person name="Katagiri S."/>
            <person name="Kikuta A."/>
            <person name="Kobayashi N."/>
            <person name="Kono I."/>
            <person name="Machita K."/>
            <person name="Maehara T."/>
            <person name="Mizuno H."/>
            <person name="Mizubayashi T."/>
            <person name="Mukai Y."/>
            <person name="Nagasaki H."/>
            <person name="Nakashima M."/>
            <person name="Nakama Y."/>
            <person name="Nakamichi Y."/>
            <person name="Nakamura M."/>
            <person name="Namiki N."/>
            <person name="Negishi M."/>
            <person name="Ohta I."/>
            <person name="Ono N."/>
            <person name="Saji S."/>
            <person name="Sakai K."/>
            <person name="Shibata M."/>
            <person name="Shimokawa T."/>
            <person name="Shomura A."/>
            <person name="Song J."/>
            <person name="Takazaki Y."/>
            <person name="Terasawa K."/>
            <person name="Tsuji K."/>
            <person name="Waki K."/>
            <person name="Yamagata H."/>
            <person name="Yamane H."/>
            <person name="Yoshiki S."/>
            <person name="Yoshihara R."/>
            <person name="Yukawa K."/>
            <person name="Zhong H."/>
            <person name="Iwama H."/>
            <person name="Endo T."/>
            <person name="Ito H."/>
            <person name="Hahn J.H."/>
            <person name="Kim H.-I."/>
            <person name="Eun M.-Y."/>
            <person name="Yano M."/>
            <person name="Jiang J."/>
            <person name="Gojobori T."/>
        </authorList>
    </citation>
    <scope>NUCLEOTIDE SEQUENCE [LARGE SCALE GENOMIC DNA]</scope>
    <source>
        <strain>cv. Nipponbare</strain>
    </source>
</reference>
<reference key="2">
    <citation type="journal article" date="2005" name="Nature">
        <title>The map-based sequence of the rice genome.</title>
        <authorList>
            <consortium name="International rice genome sequencing project (IRGSP)"/>
        </authorList>
    </citation>
    <scope>NUCLEOTIDE SEQUENCE [LARGE SCALE GENOMIC DNA]</scope>
    <source>
        <strain>cv. Nipponbare</strain>
    </source>
</reference>
<reference key="3">
    <citation type="journal article" date="2008" name="Nucleic Acids Res.">
        <title>The rice annotation project database (RAP-DB): 2008 update.</title>
        <authorList>
            <consortium name="The rice annotation project (RAP)"/>
        </authorList>
    </citation>
    <scope>GENOME REANNOTATION</scope>
    <source>
        <strain>cv. Nipponbare</strain>
    </source>
</reference>
<reference key="4">
    <citation type="journal article" date="2013" name="Rice">
        <title>Improvement of the Oryza sativa Nipponbare reference genome using next generation sequence and optical map data.</title>
        <authorList>
            <person name="Kawahara Y."/>
            <person name="de la Bastide M."/>
            <person name="Hamilton J.P."/>
            <person name="Kanamori H."/>
            <person name="McCombie W.R."/>
            <person name="Ouyang S."/>
            <person name="Schwartz D.C."/>
            <person name="Tanaka T."/>
            <person name="Wu J."/>
            <person name="Zhou S."/>
            <person name="Childs K.L."/>
            <person name="Davidson R.M."/>
            <person name="Lin H."/>
            <person name="Quesada-Ocampo L."/>
            <person name="Vaillancourt B."/>
            <person name="Sakai H."/>
            <person name="Lee S.S."/>
            <person name="Kim J."/>
            <person name="Numa H."/>
            <person name="Itoh T."/>
            <person name="Buell C.R."/>
            <person name="Matsumoto T."/>
        </authorList>
    </citation>
    <scope>GENOME REANNOTATION</scope>
    <source>
        <strain>cv. Nipponbare</strain>
    </source>
</reference>
<reference key="5">
    <citation type="journal article" date="2003" name="Science">
        <title>Collection, mapping, and annotation of over 28,000 cDNA clones from japonica rice.</title>
        <authorList>
            <consortium name="The rice full-length cDNA consortium"/>
        </authorList>
    </citation>
    <scope>NUCLEOTIDE SEQUENCE [LARGE SCALE MRNA]</scope>
    <source>
        <strain>cv. Nipponbare</strain>
    </source>
</reference>
<sequence>MAFLKTLNPLLRRSPTPIPNPRSLLSLDAFLAASSPTAASHATAPAPFAAAAHHHVPIRSGGPLFLSSPPWMLSQSATPLTAAAAALRARLRRARALAGGGAQAVADAVGWEPRRISRDESEVAEAVTGGRERFLNLPNLVSIGRMASGPVIGWMIVNEWYLPAFGTLALSGASDWLDGFLARKMGINSVFGSYLDPLADKVLIGCVAIAMVEKDLLHPGLVGLVVVRDLLLVGGAVYKRASSLGWKWNSWSDFVNLDAIHREKVKPLFISKVNTVFQLMLVAAALLQPEFGTEETQNYITVLSWLVASTTIASTVGYGIKYRQIRPRR</sequence>
<proteinExistence type="evidence at transcript level"/>
<gene>
    <name type="ordered locus">Os01g0789100</name>
    <name type="ORF">P0557A01.8</name>
</gene>
<feature type="transit peptide" description="Chloroplast" evidence="2">
    <location>
        <begin position="1"/>
        <end position="38"/>
    </location>
</feature>
<feature type="chain" id="PRO_0000429137" description="CDP-diacylglycerol--glycerol-3-phosphate 3-phosphatidyltransferase 1, chloroplastic">
    <location>
        <begin position="39"/>
        <end position="329"/>
    </location>
</feature>
<feature type="transmembrane region" description="Helical" evidence="2">
    <location>
        <begin position="150"/>
        <end position="170"/>
    </location>
</feature>
<feature type="transmembrane region" description="Helical" evidence="2">
    <location>
        <begin position="190"/>
        <end position="210"/>
    </location>
</feature>
<feature type="transmembrane region" description="Helical" evidence="2">
    <location>
        <begin position="217"/>
        <end position="237"/>
    </location>
</feature>
<feature type="transmembrane region" description="Helical" evidence="2">
    <location>
        <begin position="300"/>
        <end position="320"/>
    </location>
</feature>
<comment type="function">
    <text evidence="1">Catalyzes the committed step to the synthesis of the acidic phospholipids. Transfers specifically a phosphatidyl group from CDP-diacylglycerol to glycerol-3-phosphate to form phosphatidylglycerophosphate (By similarity).</text>
</comment>
<comment type="catalytic activity">
    <reaction>
        <text>a CDP-1,2-diacyl-sn-glycerol + sn-glycerol 3-phosphate = a 1,2-diacyl-sn-glycero-3-phospho-(1'-sn-glycero-3'-phosphate) + CMP + H(+)</text>
        <dbReference type="Rhea" id="RHEA:12593"/>
        <dbReference type="ChEBI" id="CHEBI:15378"/>
        <dbReference type="ChEBI" id="CHEBI:57597"/>
        <dbReference type="ChEBI" id="CHEBI:58332"/>
        <dbReference type="ChEBI" id="CHEBI:60110"/>
        <dbReference type="ChEBI" id="CHEBI:60377"/>
        <dbReference type="EC" id="2.7.8.5"/>
    </reaction>
</comment>
<comment type="cofactor">
    <cofactor evidence="1">
        <name>Mn(2+)</name>
        <dbReference type="ChEBI" id="CHEBI:29035"/>
    </cofactor>
</comment>
<comment type="pathway">
    <text>Phospholipid metabolism; phosphatidylglycerol biosynthesis; phosphatidylglycerol from CDP-diacylglycerol: step 1/2.</text>
</comment>
<comment type="subcellular location">
    <subcellularLocation>
        <location evidence="1">Plastid</location>
        <location evidence="1">Chloroplast membrane</location>
        <topology evidence="3">Multi-pass membrane protein</topology>
    </subcellularLocation>
</comment>
<comment type="similarity">
    <text evidence="3">Belongs to the CDP-alcohol phosphatidyltransferase class-I family.</text>
</comment>
<evidence type="ECO:0000250" key="1"/>
<evidence type="ECO:0000255" key="2"/>
<evidence type="ECO:0000305" key="3"/>
<protein>
    <recommendedName>
        <fullName>CDP-diacylglycerol--glycerol-3-phosphate 3-phosphatidyltransferase 1, chloroplastic</fullName>
        <ecNumber>2.7.8.5</ecNumber>
    </recommendedName>
    <alternativeName>
        <fullName>Phosphatidylglycerophosphate synthase 1</fullName>
        <shortName>PGP synthase 1</shortName>
    </alternativeName>
</protein>
<dbReference type="EC" id="2.7.8.5"/>
<dbReference type="EMBL" id="AP003280">
    <property type="protein sequence ID" value="BAD81959.1"/>
    <property type="molecule type" value="Genomic_DNA"/>
</dbReference>
<dbReference type="EMBL" id="AP008207">
    <property type="protein sequence ID" value="BAF06400.1"/>
    <property type="molecule type" value="Genomic_DNA"/>
</dbReference>
<dbReference type="EMBL" id="AP014957">
    <property type="protein sequence ID" value="BAS74721.1"/>
    <property type="molecule type" value="Genomic_DNA"/>
</dbReference>
<dbReference type="EMBL" id="AK069910">
    <property type="protein sequence ID" value="BAG91670.1"/>
    <property type="molecule type" value="mRNA"/>
</dbReference>
<dbReference type="RefSeq" id="XP_015625107.1">
    <property type="nucleotide sequence ID" value="XM_015769621.1"/>
</dbReference>
<dbReference type="SMR" id="Q5N9A1"/>
<dbReference type="FunCoup" id="Q5N9A1">
    <property type="interactions" value="1256"/>
</dbReference>
<dbReference type="STRING" id="39947.Q5N9A1"/>
<dbReference type="PaxDb" id="39947-Q5N9A1"/>
<dbReference type="EnsemblPlants" id="Os01t0789100-01">
    <property type="protein sequence ID" value="Os01t0789100-01"/>
    <property type="gene ID" value="Os01g0789100"/>
</dbReference>
<dbReference type="Gramene" id="Os01t0789100-01">
    <property type="protein sequence ID" value="Os01t0789100-01"/>
    <property type="gene ID" value="Os01g0789100"/>
</dbReference>
<dbReference type="KEGG" id="dosa:Os01g0789100"/>
<dbReference type="eggNOG" id="KOG1617">
    <property type="taxonomic scope" value="Eukaryota"/>
</dbReference>
<dbReference type="HOGENOM" id="CLU_051314_1_0_1"/>
<dbReference type="InParanoid" id="Q5N9A1"/>
<dbReference type="OMA" id="DTQTWIT"/>
<dbReference type="OrthoDB" id="10020554at2759"/>
<dbReference type="PlantReactome" id="R-OSA-1119260">
    <property type="pathway name" value="Cardiolipin biosynthesis"/>
</dbReference>
<dbReference type="UniPathway" id="UPA00084">
    <property type="reaction ID" value="UER00503"/>
</dbReference>
<dbReference type="Proteomes" id="UP000000763">
    <property type="component" value="Chromosome 1"/>
</dbReference>
<dbReference type="Proteomes" id="UP000059680">
    <property type="component" value="Chromosome 1"/>
</dbReference>
<dbReference type="GO" id="GO:0031969">
    <property type="term" value="C:chloroplast membrane"/>
    <property type="evidence" value="ECO:0007669"/>
    <property type="project" value="UniProtKB-SubCell"/>
</dbReference>
<dbReference type="GO" id="GO:0005743">
    <property type="term" value="C:mitochondrial inner membrane"/>
    <property type="evidence" value="ECO:0007669"/>
    <property type="project" value="EnsemblPlants"/>
</dbReference>
<dbReference type="GO" id="GO:0005739">
    <property type="term" value="C:mitochondrion"/>
    <property type="evidence" value="ECO:0000318"/>
    <property type="project" value="GO_Central"/>
</dbReference>
<dbReference type="GO" id="GO:0043337">
    <property type="term" value="F:cardiolipin synthase (CMP-forming)"/>
    <property type="evidence" value="ECO:0000318"/>
    <property type="project" value="GO_Central"/>
</dbReference>
<dbReference type="GO" id="GO:0008808">
    <property type="term" value="F:cardiolipin synthase activity"/>
    <property type="evidence" value="ECO:0007669"/>
    <property type="project" value="EnsemblPlants"/>
</dbReference>
<dbReference type="GO" id="GO:0008444">
    <property type="term" value="F:CDP-diacylglycerol-glycerol-3-phosphate 3-phosphatidyltransferase activity"/>
    <property type="evidence" value="ECO:0007669"/>
    <property type="project" value="UniProtKB-EC"/>
</dbReference>
<dbReference type="GO" id="GO:0030145">
    <property type="term" value="F:manganese ion binding"/>
    <property type="evidence" value="ECO:0007669"/>
    <property type="project" value="EnsemblPlants"/>
</dbReference>
<dbReference type="GO" id="GO:0032049">
    <property type="term" value="P:cardiolipin biosynthetic process"/>
    <property type="evidence" value="ECO:0000318"/>
    <property type="project" value="GO_Central"/>
</dbReference>
<dbReference type="FunFam" id="1.20.120.1760:FF:000020">
    <property type="entry name" value="cardiolipin synthase (CMP-forming), mitochondrial"/>
    <property type="match status" value="1"/>
</dbReference>
<dbReference type="Gene3D" id="1.20.120.1760">
    <property type="match status" value="1"/>
</dbReference>
<dbReference type="InterPro" id="IPR050324">
    <property type="entry name" value="CDP-alcohol_PTase-I"/>
</dbReference>
<dbReference type="InterPro" id="IPR000462">
    <property type="entry name" value="CDP-OH_P_trans"/>
</dbReference>
<dbReference type="InterPro" id="IPR043130">
    <property type="entry name" value="CDP-OH_PTrfase_TM_dom"/>
</dbReference>
<dbReference type="InterPro" id="IPR048254">
    <property type="entry name" value="CDP_ALCOHOL_P_TRANSF_CS"/>
</dbReference>
<dbReference type="PANTHER" id="PTHR14269:SF60">
    <property type="entry name" value="CARDIOLIPIN SYNTHASE (CMP-FORMING)"/>
    <property type="match status" value="1"/>
</dbReference>
<dbReference type="PANTHER" id="PTHR14269">
    <property type="entry name" value="CDP-DIACYLGLYCEROL--GLYCEROL-3-PHOSPHATE 3-PHOSPHATIDYLTRANSFERASE-RELATED"/>
    <property type="match status" value="1"/>
</dbReference>
<dbReference type="Pfam" id="PF01066">
    <property type="entry name" value="CDP-OH_P_transf"/>
    <property type="match status" value="1"/>
</dbReference>
<dbReference type="PROSITE" id="PS00379">
    <property type="entry name" value="CDP_ALCOHOL_P_TRANSF"/>
    <property type="match status" value="1"/>
</dbReference>
<name>PGPS1_ORYSJ</name>
<accession>Q5N9A1</accession>
<accession>A0A0N7KDW1</accession>
<organism>
    <name type="scientific">Oryza sativa subsp. japonica</name>
    <name type="common">Rice</name>
    <dbReference type="NCBI Taxonomy" id="39947"/>
    <lineage>
        <taxon>Eukaryota</taxon>
        <taxon>Viridiplantae</taxon>
        <taxon>Streptophyta</taxon>
        <taxon>Embryophyta</taxon>
        <taxon>Tracheophyta</taxon>
        <taxon>Spermatophyta</taxon>
        <taxon>Magnoliopsida</taxon>
        <taxon>Liliopsida</taxon>
        <taxon>Poales</taxon>
        <taxon>Poaceae</taxon>
        <taxon>BOP clade</taxon>
        <taxon>Oryzoideae</taxon>
        <taxon>Oryzeae</taxon>
        <taxon>Oryzinae</taxon>
        <taxon>Oryza</taxon>
        <taxon>Oryza sativa</taxon>
    </lineage>
</organism>
<keyword id="KW-0150">Chloroplast</keyword>
<keyword id="KW-0444">Lipid biosynthesis</keyword>
<keyword id="KW-0443">Lipid metabolism</keyword>
<keyword id="KW-0472">Membrane</keyword>
<keyword id="KW-0594">Phospholipid biosynthesis</keyword>
<keyword id="KW-1208">Phospholipid metabolism</keyword>
<keyword id="KW-0934">Plastid</keyword>
<keyword id="KW-1185">Reference proteome</keyword>
<keyword id="KW-0808">Transferase</keyword>
<keyword id="KW-0809">Transit peptide</keyword>
<keyword id="KW-0812">Transmembrane</keyword>
<keyword id="KW-1133">Transmembrane helix</keyword>